<dbReference type="EMBL" id="AE014134">
    <property type="protein sequence ID" value="AAF52511.1"/>
    <property type="molecule type" value="Genomic_DNA"/>
</dbReference>
<dbReference type="EMBL" id="BT010046">
    <property type="protein sequence ID" value="AAQ22515.1"/>
    <property type="molecule type" value="mRNA"/>
</dbReference>
<dbReference type="RefSeq" id="NP_609115.1">
    <property type="nucleotide sequence ID" value="NM_135271.3"/>
</dbReference>
<dbReference type="SMR" id="Q9VM17"/>
<dbReference type="BioGRID" id="60164">
    <property type="interactions" value="1"/>
</dbReference>
<dbReference type="FunCoup" id="Q9VM17">
    <property type="interactions" value="717"/>
</dbReference>
<dbReference type="IntAct" id="Q9VM17">
    <property type="interactions" value="4"/>
</dbReference>
<dbReference type="STRING" id="7227.FBpp0079091"/>
<dbReference type="GlyGen" id="Q9VM17">
    <property type="glycosylation" value="1 site"/>
</dbReference>
<dbReference type="PaxDb" id="7227-FBpp0079091"/>
<dbReference type="DNASU" id="34018"/>
<dbReference type="EnsemblMetazoa" id="FBtr0079467">
    <property type="protein sequence ID" value="FBpp0079091"/>
    <property type="gene ID" value="FBgn0031909"/>
</dbReference>
<dbReference type="GeneID" id="34018"/>
<dbReference type="KEGG" id="dme:Dmel_CG5181"/>
<dbReference type="UCSC" id="CG5181-RA">
    <property type="organism name" value="d. melanogaster"/>
</dbReference>
<dbReference type="AGR" id="FB:FBgn0031909"/>
<dbReference type="FlyBase" id="FBgn0031909">
    <property type="gene designation" value="CG5181"/>
</dbReference>
<dbReference type="VEuPathDB" id="VectorBase:FBgn0031909"/>
<dbReference type="eggNOG" id="KOG3416">
    <property type="taxonomic scope" value="Eukaryota"/>
</dbReference>
<dbReference type="GeneTree" id="ENSGT00940000155812"/>
<dbReference type="HOGENOM" id="CLU_102724_0_0_1"/>
<dbReference type="InParanoid" id="Q9VM17"/>
<dbReference type="OMA" id="CIPIKDI"/>
<dbReference type="OrthoDB" id="295715at2759"/>
<dbReference type="PhylomeDB" id="Q9VM17"/>
<dbReference type="Reactome" id="R-DME-6807505">
    <property type="pathway name" value="RNA polymerase II transcribes snRNA genes"/>
</dbReference>
<dbReference type="BioGRID-ORCS" id="34018">
    <property type="hits" value="0 hits in 3 CRISPR screens"/>
</dbReference>
<dbReference type="GenomeRNAi" id="34018"/>
<dbReference type="PRO" id="PR:Q9VM17"/>
<dbReference type="Proteomes" id="UP000000803">
    <property type="component" value="Chromosome 2L"/>
</dbReference>
<dbReference type="Bgee" id="FBgn0031909">
    <property type="expression patterns" value="Expressed in wing disc and 109 other cell types or tissues"/>
</dbReference>
<dbReference type="GO" id="GO:0005737">
    <property type="term" value="C:cytoplasm"/>
    <property type="evidence" value="ECO:0000250"/>
    <property type="project" value="FlyBase"/>
</dbReference>
<dbReference type="GO" id="GO:0005634">
    <property type="term" value="C:nucleus"/>
    <property type="evidence" value="ECO:0000250"/>
    <property type="project" value="FlyBase"/>
</dbReference>
<dbReference type="GO" id="GO:0070876">
    <property type="term" value="C:SOSS complex"/>
    <property type="evidence" value="ECO:0000318"/>
    <property type="project" value="GO_Central"/>
</dbReference>
<dbReference type="GO" id="GO:0003677">
    <property type="term" value="F:DNA binding"/>
    <property type="evidence" value="ECO:0000318"/>
    <property type="project" value="GO_Central"/>
</dbReference>
<dbReference type="GO" id="GO:0003697">
    <property type="term" value="F:single-stranded DNA binding"/>
    <property type="evidence" value="ECO:0000250"/>
    <property type="project" value="FlyBase"/>
</dbReference>
<dbReference type="GO" id="GO:0006281">
    <property type="term" value="P:DNA repair"/>
    <property type="evidence" value="ECO:0000250"/>
    <property type="project" value="FlyBase"/>
</dbReference>
<dbReference type="GO" id="GO:0000724">
    <property type="term" value="P:double-strand break repair via homologous recombination"/>
    <property type="evidence" value="ECO:0000318"/>
    <property type="project" value="GO_Central"/>
</dbReference>
<dbReference type="GO" id="GO:0044818">
    <property type="term" value="P:mitotic G2/M transition checkpoint"/>
    <property type="evidence" value="ECO:0000318"/>
    <property type="project" value="GO_Central"/>
</dbReference>
<dbReference type="GO" id="GO:0010212">
    <property type="term" value="P:response to ionizing radiation"/>
    <property type="evidence" value="ECO:0000318"/>
    <property type="project" value="GO_Central"/>
</dbReference>
<dbReference type="CDD" id="cd04491">
    <property type="entry name" value="SoSSB_OBF"/>
    <property type="match status" value="1"/>
</dbReference>
<dbReference type="FunFam" id="2.40.50.140:FF:000072">
    <property type="entry name" value="SOSS complex subunit B2"/>
    <property type="match status" value="1"/>
</dbReference>
<dbReference type="Gene3D" id="2.40.50.140">
    <property type="entry name" value="Nucleic acid-binding proteins"/>
    <property type="match status" value="1"/>
</dbReference>
<dbReference type="InterPro" id="IPR012340">
    <property type="entry name" value="NA-bd_OB-fold"/>
</dbReference>
<dbReference type="InterPro" id="IPR051231">
    <property type="entry name" value="SOSS-B"/>
</dbReference>
<dbReference type="PANTHER" id="PTHR13356">
    <property type="entry name" value="OB FOLD NUCLEIC ACID BINDING PROTEIN-RELATED"/>
    <property type="match status" value="1"/>
</dbReference>
<dbReference type="PANTHER" id="PTHR13356:SF0">
    <property type="entry name" value="SOSS COMPLEX SUBUNIT B HOMOLOG"/>
    <property type="match status" value="1"/>
</dbReference>
<dbReference type="SUPFAM" id="SSF50249">
    <property type="entry name" value="Nucleic acid-binding proteins"/>
    <property type="match status" value="1"/>
</dbReference>
<name>SOSSB_DROME</name>
<proteinExistence type="evidence at transcript level"/>
<feature type="chain" id="PRO_0000385305" description="SOSS complex subunit B homolog">
    <location>
        <begin position="1"/>
        <end position="204"/>
    </location>
</feature>
<feature type="DNA-binding region" description="OB">
    <location>
        <begin position="24"/>
        <end position="94"/>
    </location>
</feature>
<feature type="region of interest" description="Disordered" evidence="1">
    <location>
        <begin position="115"/>
        <end position="204"/>
    </location>
</feature>
<feature type="compositionally biased region" description="Low complexity" evidence="1">
    <location>
        <begin position="122"/>
        <end position="131"/>
    </location>
</feature>
<feature type="compositionally biased region" description="Low complexity" evidence="1">
    <location>
        <begin position="139"/>
        <end position="183"/>
    </location>
</feature>
<feature type="compositionally biased region" description="Gly residues" evidence="1">
    <location>
        <begin position="187"/>
        <end position="198"/>
    </location>
</feature>
<gene>
    <name type="ORF">CG5181</name>
</gene>
<evidence type="ECO:0000256" key="1">
    <source>
        <dbReference type="SAM" id="MobiDB-lite"/>
    </source>
</evidence>
<evidence type="ECO:0000305" key="2"/>
<comment type="similarity">
    <text evidence="2">Belongs to the SOSS-B family.</text>
</comment>
<protein>
    <recommendedName>
        <fullName>SOSS complex subunit B homolog</fullName>
    </recommendedName>
</protein>
<reference key="1">
    <citation type="journal article" date="2000" name="Science">
        <title>The genome sequence of Drosophila melanogaster.</title>
        <authorList>
            <person name="Adams M.D."/>
            <person name="Celniker S.E."/>
            <person name="Holt R.A."/>
            <person name="Evans C.A."/>
            <person name="Gocayne J.D."/>
            <person name="Amanatides P.G."/>
            <person name="Scherer S.E."/>
            <person name="Li P.W."/>
            <person name="Hoskins R.A."/>
            <person name="Galle R.F."/>
            <person name="George R.A."/>
            <person name="Lewis S.E."/>
            <person name="Richards S."/>
            <person name="Ashburner M."/>
            <person name="Henderson S.N."/>
            <person name="Sutton G.G."/>
            <person name="Wortman J.R."/>
            <person name="Yandell M.D."/>
            <person name="Zhang Q."/>
            <person name="Chen L.X."/>
            <person name="Brandon R.C."/>
            <person name="Rogers Y.-H.C."/>
            <person name="Blazej R.G."/>
            <person name="Champe M."/>
            <person name="Pfeiffer B.D."/>
            <person name="Wan K.H."/>
            <person name="Doyle C."/>
            <person name="Baxter E.G."/>
            <person name="Helt G."/>
            <person name="Nelson C.R."/>
            <person name="Miklos G.L.G."/>
            <person name="Abril J.F."/>
            <person name="Agbayani A."/>
            <person name="An H.-J."/>
            <person name="Andrews-Pfannkoch C."/>
            <person name="Baldwin D."/>
            <person name="Ballew R.M."/>
            <person name="Basu A."/>
            <person name="Baxendale J."/>
            <person name="Bayraktaroglu L."/>
            <person name="Beasley E.M."/>
            <person name="Beeson K.Y."/>
            <person name="Benos P.V."/>
            <person name="Berman B.P."/>
            <person name="Bhandari D."/>
            <person name="Bolshakov S."/>
            <person name="Borkova D."/>
            <person name="Botchan M.R."/>
            <person name="Bouck J."/>
            <person name="Brokstein P."/>
            <person name="Brottier P."/>
            <person name="Burtis K.C."/>
            <person name="Busam D.A."/>
            <person name="Butler H."/>
            <person name="Cadieu E."/>
            <person name="Center A."/>
            <person name="Chandra I."/>
            <person name="Cherry J.M."/>
            <person name="Cawley S."/>
            <person name="Dahlke C."/>
            <person name="Davenport L.B."/>
            <person name="Davies P."/>
            <person name="de Pablos B."/>
            <person name="Delcher A."/>
            <person name="Deng Z."/>
            <person name="Mays A.D."/>
            <person name="Dew I."/>
            <person name="Dietz S.M."/>
            <person name="Dodson K."/>
            <person name="Doup L.E."/>
            <person name="Downes M."/>
            <person name="Dugan-Rocha S."/>
            <person name="Dunkov B.C."/>
            <person name="Dunn P."/>
            <person name="Durbin K.J."/>
            <person name="Evangelista C.C."/>
            <person name="Ferraz C."/>
            <person name="Ferriera S."/>
            <person name="Fleischmann W."/>
            <person name="Fosler C."/>
            <person name="Gabrielian A.E."/>
            <person name="Garg N.S."/>
            <person name="Gelbart W.M."/>
            <person name="Glasser K."/>
            <person name="Glodek A."/>
            <person name="Gong F."/>
            <person name="Gorrell J.H."/>
            <person name="Gu Z."/>
            <person name="Guan P."/>
            <person name="Harris M."/>
            <person name="Harris N.L."/>
            <person name="Harvey D.A."/>
            <person name="Heiman T.J."/>
            <person name="Hernandez J.R."/>
            <person name="Houck J."/>
            <person name="Hostin D."/>
            <person name="Houston K.A."/>
            <person name="Howland T.J."/>
            <person name="Wei M.-H."/>
            <person name="Ibegwam C."/>
            <person name="Jalali M."/>
            <person name="Kalush F."/>
            <person name="Karpen G.H."/>
            <person name="Ke Z."/>
            <person name="Kennison J.A."/>
            <person name="Ketchum K.A."/>
            <person name="Kimmel B.E."/>
            <person name="Kodira C.D."/>
            <person name="Kraft C.L."/>
            <person name="Kravitz S."/>
            <person name="Kulp D."/>
            <person name="Lai Z."/>
            <person name="Lasko P."/>
            <person name="Lei Y."/>
            <person name="Levitsky A.A."/>
            <person name="Li J.H."/>
            <person name="Li Z."/>
            <person name="Liang Y."/>
            <person name="Lin X."/>
            <person name="Liu X."/>
            <person name="Mattei B."/>
            <person name="McIntosh T.C."/>
            <person name="McLeod M.P."/>
            <person name="McPherson D."/>
            <person name="Merkulov G."/>
            <person name="Milshina N.V."/>
            <person name="Mobarry C."/>
            <person name="Morris J."/>
            <person name="Moshrefi A."/>
            <person name="Mount S.M."/>
            <person name="Moy M."/>
            <person name="Murphy B."/>
            <person name="Murphy L."/>
            <person name="Muzny D.M."/>
            <person name="Nelson D.L."/>
            <person name="Nelson D.R."/>
            <person name="Nelson K.A."/>
            <person name="Nixon K."/>
            <person name="Nusskern D.R."/>
            <person name="Pacleb J.M."/>
            <person name="Palazzolo M."/>
            <person name="Pittman G.S."/>
            <person name="Pan S."/>
            <person name="Pollard J."/>
            <person name="Puri V."/>
            <person name="Reese M.G."/>
            <person name="Reinert K."/>
            <person name="Remington K."/>
            <person name="Saunders R.D.C."/>
            <person name="Scheeler F."/>
            <person name="Shen H."/>
            <person name="Shue B.C."/>
            <person name="Siden-Kiamos I."/>
            <person name="Simpson M."/>
            <person name="Skupski M.P."/>
            <person name="Smith T.J."/>
            <person name="Spier E."/>
            <person name="Spradling A.C."/>
            <person name="Stapleton M."/>
            <person name="Strong R."/>
            <person name="Sun E."/>
            <person name="Svirskas R."/>
            <person name="Tector C."/>
            <person name="Turner R."/>
            <person name="Venter E."/>
            <person name="Wang A.H."/>
            <person name="Wang X."/>
            <person name="Wang Z.-Y."/>
            <person name="Wassarman D.A."/>
            <person name="Weinstock G.M."/>
            <person name="Weissenbach J."/>
            <person name="Williams S.M."/>
            <person name="Woodage T."/>
            <person name="Worley K.C."/>
            <person name="Wu D."/>
            <person name="Yang S."/>
            <person name="Yao Q.A."/>
            <person name="Ye J."/>
            <person name="Yeh R.-F."/>
            <person name="Zaveri J.S."/>
            <person name="Zhan M."/>
            <person name="Zhang G."/>
            <person name="Zhao Q."/>
            <person name="Zheng L."/>
            <person name="Zheng X.H."/>
            <person name="Zhong F.N."/>
            <person name="Zhong W."/>
            <person name="Zhou X."/>
            <person name="Zhu S.C."/>
            <person name="Zhu X."/>
            <person name="Smith H.O."/>
            <person name="Gibbs R.A."/>
            <person name="Myers E.W."/>
            <person name="Rubin G.M."/>
            <person name="Venter J.C."/>
        </authorList>
    </citation>
    <scope>NUCLEOTIDE SEQUENCE [LARGE SCALE GENOMIC DNA]</scope>
    <source>
        <strain>Berkeley</strain>
    </source>
</reference>
<reference key="2">
    <citation type="journal article" date="2002" name="Genome Biol.">
        <title>Annotation of the Drosophila melanogaster euchromatic genome: a systematic review.</title>
        <authorList>
            <person name="Misra S."/>
            <person name="Crosby M.A."/>
            <person name="Mungall C.J."/>
            <person name="Matthews B.B."/>
            <person name="Campbell K.S."/>
            <person name="Hradecky P."/>
            <person name="Huang Y."/>
            <person name="Kaminker J.S."/>
            <person name="Millburn G.H."/>
            <person name="Prochnik S.E."/>
            <person name="Smith C.D."/>
            <person name="Tupy J.L."/>
            <person name="Whitfield E.J."/>
            <person name="Bayraktaroglu L."/>
            <person name="Berman B.P."/>
            <person name="Bettencourt B.R."/>
            <person name="Celniker S.E."/>
            <person name="de Grey A.D.N.J."/>
            <person name="Drysdale R.A."/>
            <person name="Harris N.L."/>
            <person name="Richter J."/>
            <person name="Russo S."/>
            <person name="Schroeder A.J."/>
            <person name="Shu S.Q."/>
            <person name="Stapleton M."/>
            <person name="Yamada C."/>
            <person name="Ashburner M."/>
            <person name="Gelbart W.M."/>
            <person name="Rubin G.M."/>
            <person name="Lewis S.E."/>
        </authorList>
    </citation>
    <scope>GENOME REANNOTATION</scope>
    <source>
        <strain>Berkeley</strain>
    </source>
</reference>
<reference key="3">
    <citation type="submission" date="2003-08" db="EMBL/GenBank/DDBJ databases">
        <authorList>
            <person name="Stapleton M."/>
            <person name="Brokstein P."/>
            <person name="Hong L."/>
            <person name="Agbayani A."/>
            <person name="Carlson J.W."/>
            <person name="Champe M."/>
            <person name="Chavez C."/>
            <person name="Dorsett V."/>
            <person name="Dresnek D."/>
            <person name="Farfan D."/>
            <person name="Frise E."/>
            <person name="George R.A."/>
            <person name="Gonzalez M."/>
            <person name="Guarin H."/>
            <person name="Kronmiller B."/>
            <person name="Li P.W."/>
            <person name="Liao G."/>
            <person name="Miranda A."/>
            <person name="Mungall C.J."/>
            <person name="Nunoo J."/>
            <person name="Pacleb J.M."/>
            <person name="Paragas V."/>
            <person name="Park S."/>
            <person name="Patel S."/>
            <person name="Phouanenavong S."/>
            <person name="Wan K.H."/>
            <person name="Yu C."/>
            <person name="Lewis S.E."/>
            <person name="Rubin G.M."/>
            <person name="Celniker S.E."/>
        </authorList>
    </citation>
    <scope>NUCLEOTIDE SEQUENCE [LARGE SCALE MRNA]</scope>
    <source>
        <strain>Berkeley</strain>
        <tissue>Embryo</tissue>
    </source>
</reference>
<organism>
    <name type="scientific">Drosophila melanogaster</name>
    <name type="common">Fruit fly</name>
    <dbReference type="NCBI Taxonomy" id="7227"/>
    <lineage>
        <taxon>Eukaryota</taxon>
        <taxon>Metazoa</taxon>
        <taxon>Ecdysozoa</taxon>
        <taxon>Arthropoda</taxon>
        <taxon>Hexapoda</taxon>
        <taxon>Insecta</taxon>
        <taxon>Pterygota</taxon>
        <taxon>Neoptera</taxon>
        <taxon>Endopterygota</taxon>
        <taxon>Diptera</taxon>
        <taxon>Brachycera</taxon>
        <taxon>Muscomorpha</taxon>
        <taxon>Ephydroidea</taxon>
        <taxon>Drosophilidae</taxon>
        <taxon>Drosophila</taxon>
        <taxon>Sophophora</taxon>
    </lineage>
</organism>
<sequence>MYNVECIPIKDIKPGLKNINVIFIVLEVGVATVTKENREVRNFKVGDPTACINVSIWDEPGKLIAPGDIVRLTKGYASIWRHCLTLYSGKNGEVFKIGEYCMVFNESVNMSEPKRAEQQAVANPAATPAGLPAGGGAPGLPAKGGATGIPQPAVAAAPGAPATQSAVTTAPAAAPAIAPQTTTKPGTRGGRGGGGRGGLKGERR</sequence>
<accession>Q9VM17</accession>
<keyword id="KW-0238">DNA-binding</keyword>
<keyword id="KW-1185">Reference proteome</keyword>